<sequence>MAKTMQLEIVSAEAAIFSGKVEMIVVTGGMGELGIYPGHRQLLTSLKPGQIKAILEGGKEEVFYMSGGMLEVQPEIVTILADTALRAVDLDEAAAISAKEEAERRLAKQKAGIEYSKAMTELAEAAAQLRAIQMLRKSAKKH</sequence>
<organism>
    <name type="scientific">Coxiella burnetii (strain CbuG_Q212)</name>
    <name type="common">Coxiella burnetii (strain Q212)</name>
    <dbReference type="NCBI Taxonomy" id="434923"/>
    <lineage>
        <taxon>Bacteria</taxon>
        <taxon>Pseudomonadati</taxon>
        <taxon>Pseudomonadota</taxon>
        <taxon>Gammaproteobacteria</taxon>
        <taxon>Legionellales</taxon>
        <taxon>Coxiellaceae</taxon>
        <taxon>Coxiella</taxon>
    </lineage>
</organism>
<comment type="function">
    <text evidence="1">Produces ATP from ADP in the presence of a proton gradient across the membrane.</text>
</comment>
<comment type="subunit">
    <text evidence="1">F-type ATPases have 2 components, CF(1) - the catalytic core - and CF(0) - the membrane proton channel. CF(1) has five subunits: alpha(3), beta(3), gamma(1), delta(1), epsilon(1). CF(0) has three main subunits: a, b and c.</text>
</comment>
<comment type="subcellular location">
    <subcellularLocation>
        <location evidence="1">Cell inner membrane</location>
        <topology evidence="1">Peripheral membrane protein</topology>
    </subcellularLocation>
</comment>
<comment type="similarity">
    <text evidence="1">Belongs to the ATPase epsilon chain family.</text>
</comment>
<protein>
    <recommendedName>
        <fullName evidence="1">ATP synthase epsilon chain</fullName>
    </recommendedName>
    <alternativeName>
        <fullName evidence="1">ATP synthase F1 sector epsilon subunit</fullName>
    </alternativeName>
    <alternativeName>
        <fullName evidence="1">F-ATPase epsilon subunit</fullName>
    </alternativeName>
</protein>
<evidence type="ECO:0000255" key="1">
    <source>
        <dbReference type="HAMAP-Rule" id="MF_00530"/>
    </source>
</evidence>
<proteinExistence type="inferred from homology"/>
<gene>
    <name evidence="1" type="primary">atpC</name>
    <name type="ordered locus">CbuG_0057</name>
</gene>
<name>ATPE_COXB2</name>
<feature type="chain" id="PRO_1000127843" description="ATP synthase epsilon chain">
    <location>
        <begin position="1"/>
        <end position="142"/>
    </location>
</feature>
<dbReference type="EMBL" id="CP001019">
    <property type="protein sequence ID" value="ACJ17515.1"/>
    <property type="molecule type" value="Genomic_DNA"/>
</dbReference>
<dbReference type="RefSeq" id="WP_005770045.1">
    <property type="nucleotide sequence ID" value="NC_011527.1"/>
</dbReference>
<dbReference type="SMR" id="B6J2E1"/>
<dbReference type="KEGG" id="cbg:CbuG_0057"/>
<dbReference type="HOGENOM" id="CLU_084338_2_0_6"/>
<dbReference type="GO" id="GO:0005886">
    <property type="term" value="C:plasma membrane"/>
    <property type="evidence" value="ECO:0007669"/>
    <property type="project" value="UniProtKB-SubCell"/>
</dbReference>
<dbReference type="GO" id="GO:0045259">
    <property type="term" value="C:proton-transporting ATP synthase complex"/>
    <property type="evidence" value="ECO:0007669"/>
    <property type="project" value="UniProtKB-KW"/>
</dbReference>
<dbReference type="GO" id="GO:0005524">
    <property type="term" value="F:ATP binding"/>
    <property type="evidence" value="ECO:0007669"/>
    <property type="project" value="UniProtKB-UniRule"/>
</dbReference>
<dbReference type="GO" id="GO:0046933">
    <property type="term" value="F:proton-transporting ATP synthase activity, rotational mechanism"/>
    <property type="evidence" value="ECO:0007669"/>
    <property type="project" value="UniProtKB-UniRule"/>
</dbReference>
<dbReference type="CDD" id="cd12152">
    <property type="entry name" value="F1-ATPase_delta"/>
    <property type="match status" value="1"/>
</dbReference>
<dbReference type="FunFam" id="2.60.15.10:FF:000001">
    <property type="entry name" value="ATP synthase epsilon chain"/>
    <property type="match status" value="1"/>
</dbReference>
<dbReference type="Gene3D" id="1.20.5.440">
    <property type="entry name" value="ATP synthase delta/epsilon subunit, C-terminal domain"/>
    <property type="match status" value="1"/>
</dbReference>
<dbReference type="Gene3D" id="2.60.15.10">
    <property type="entry name" value="F0F1 ATP synthase delta/epsilon subunit, N-terminal"/>
    <property type="match status" value="1"/>
</dbReference>
<dbReference type="HAMAP" id="MF_00530">
    <property type="entry name" value="ATP_synth_epsil_bac"/>
    <property type="match status" value="1"/>
</dbReference>
<dbReference type="InterPro" id="IPR036794">
    <property type="entry name" value="ATP_F1_dsu/esu_C_sf"/>
</dbReference>
<dbReference type="InterPro" id="IPR001469">
    <property type="entry name" value="ATP_synth_F1_dsu/esu"/>
</dbReference>
<dbReference type="InterPro" id="IPR020546">
    <property type="entry name" value="ATP_synth_F1_dsu/esu_N"/>
</dbReference>
<dbReference type="InterPro" id="IPR020547">
    <property type="entry name" value="ATP_synth_F1_esu_C"/>
</dbReference>
<dbReference type="InterPro" id="IPR036771">
    <property type="entry name" value="ATPsynth_dsu/esu_N"/>
</dbReference>
<dbReference type="NCBIfam" id="TIGR01216">
    <property type="entry name" value="ATP_synt_epsi"/>
    <property type="match status" value="1"/>
</dbReference>
<dbReference type="NCBIfam" id="NF001847">
    <property type="entry name" value="PRK00571.1-4"/>
    <property type="match status" value="1"/>
</dbReference>
<dbReference type="PANTHER" id="PTHR13822">
    <property type="entry name" value="ATP SYNTHASE DELTA/EPSILON CHAIN"/>
    <property type="match status" value="1"/>
</dbReference>
<dbReference type="PANTHER" id="PTHR13822:SF10">
    <property type="entry name" value="ATP SYNTHASE EPSILON CHAIN, CHLOROPLASTIC"/>
    <property type="match status" value="1"/>
</dbReference>
<dbReference type="Pfam" id="PF00401">
    <property type="entry name" value="ATP-synt_DE"/>
    <property type="match status" value="1"/>
</dbReference>
<dbReference type="Pfam" id="PF02823">
    <property type="entry name" value="ATP-synt_DE_N"/>
    <property type="match status" value="1"/>
</dbReference>
<dbReference type="SUPFAM" id="SSF46604">
    <property type="entry name" value="Epsilon subunit of F1F0-ATP synthase C-terminal domain"/>
    <property type="match status" value="1"/>
</dbReference>
<dbReference type="SUPFAM" id="SSF51344">
    <property type="entry name" value="Epsilon subunit of F1F0-ATP synthase N-terminal domain"/>
    <property type="match status" value="1"/>
</dbReference>
<reference key="1">
    <citation type="journal article" date="2009" name="Infect. Immun.">
        <title>Comparative genomics reveal extensive transposon-mediated genomic plasticity and diversity among potential effector proteins within the genus Coxiella.</title>
        <authorList>
            <person name="Beare P.A."/>
            <person name="Unsworth N."/>
            <person name="Andoh M."/>
            <person name="Voth D.E."/>
            <person name="Omsland A."/>
            <person name="Gilk S.D."/>
            <person name="Williams K.P."/>
            <person name="Sobral B.W."/>
            <person name="Kupko J.J. III"/>
            <person name="Porcella S.F."/>
            <person name="Samuel J.E."/>
            <person name="Heinzen R.A."/>
        </authorList>
    </citation>
    <scope>NUCLEOTIDE SEQUENCE [LARGE SCALE GENOMIC DNA]</scope>
    <source>
        <strain>CbuG_Q212</strain>
    </source>
</reference>
<accession>B6J2E1</accession>
<keyword id="KW-0066">ATP synthesis</keyword>
<keyword id="KW-0997">Cell inner membrane</keyword>
<keyword id="KW-1003">Cell membrane</keyword>
<keyword id="KW-0139">CF(1)</keyword>
<keyword id="KW-0375">Hydrogen ion transport</keyword>
<keyword id="KW-0406">Ion transport</keyword>
<keyword id="KW-0472">Membrane</keyword>
<keyword id="KW-0813">Transport</keyword>